<protein>
    <recommendedName>
        <fullName evidence="1">Elongation factor 4</fullName>
        <shortName evidence="1">EF-4</shortName>
        <ecNumber evidence="1">3.6.5.n1</ecNumber>
    </recommendedName>
    <alternativeName>
        <fullName evidence="1">Ribosomal back-translocase LepA</fullName>
    </alternativeName>
</protein>
<reference key="1">
    <citation type="submission" date="2007-03" db="EMBL/GenBank/DDBJ databases">
        <authorList>
            <person name="Heidelberg J."/>
        </authorList>
    </citation>
    <scope>NUCLEOTIDE SEQUENCE [LARGE SCALE GENOMIC DNA]</scope>
    <source>
        <strain>ATCC 39541 / Classical Ogawa 395 / O395</strain>
    </source>
</reference>
<reference key="2">
    <citation type="journal article" date="2008" name="PLoS ONE">
        <title>A recalibrated molecular clock and independent origins for the cholera pandemic clones.</title>
        <authorList>
            <person name="Feng L."/>
            <person name="Reeves P.R."/>
            <person name="Lan R."/>
            <person name="Ren Y."/>
            <person name="Gao C."/>
            <person name="Zhou Z."/>
            <person name="Ren Y."/>
            <person name="Cheng J."/>
            <person name="Wang W."/>
            <person name="Wang J."/>
            <person name="Qian W."/>
            <person name="Li D."/>
            <person name="Wang L."/>
        </authorList>
    </citation>
    <scope>NUCLEOTIDE SEQUENCE [LARGE SCALE GENOMIC DNA]</scope>
    <source>
        <strain>ATCC 39541 / Classical Ogawa 395 / O395</strain>
    </source>
</reference>
<keyword id="KW-0997">Cell inner membrane</keyword>
<keyword id="KW-1003">Cell membrane</keyword>
<keyword id="KW-0342">GTP-binding</keyword>
<keyword id="KW-0378">Hydrolase</keyword>
<keyword id="KW-0472">Membrane</keyword>
<keyword id="KW-0547">Nucleotide-binding</keyword>
<keyword id="KW-0648">Protein biosynthesis</keyword>
<dbReference type="EC" id="3.6.5.n1" evidence="1"/>
<dbReference type="EMBL" id="CP000627">
    <property type="protein sequence ID" value="ABQ19679.1"/>
    <property type="molecule type" value="Genomic_DNA"/>
</dbReference>
<dbReference type="EMBL" id="CP001235">
    <property type="protein sequence ID" value="ACP10565.1"/>
    <property type="molecule type" value="Genomic_DNA"/>
</dbReference>
<dbReference type="RefSeq" id="WP_000680632.1">
    <property type="nucleotide sequence ID" value="NZ_JAACZH010000010.1"/>
</dbReference>
<dbReference type="SMR" id="A5F5G3"/>
<dbReference type="GeneID" id="69718931"/>
<dbReference type="KEGG" id="vco:VC0395_A2041"/>
<dbReference type="KEGG" id="vcr:VC395_2578"/>
<dbReference type="PATRIC" id="fig|345073.21.peg.2483"/>
<dbReference type="eggNOG" id="COG0481">
    <property type="taxonomic scope" value="Bacteria"/>
</dbReference>
<dbReference type="HOGENOM" id="CLU_009995_3_3_6"/>
<dbReference type="OrthoDB" id="9804431at2"/>
<dbReference type="Proteomes" id="UP000000249">
    <property type="component" value="Chromosome 2"/>
</dbReference>
<dbReference type="GO" id="GO:0005886">
    <property type="term" value="C:plasma membrane"/>
    <property type="evidence" value="ECO:0007669"/>
    <property type="project" value="UniProtKB-SubCell"/>
</dbReference>
<dbReference type="GO" id="GO:0005525">
    <property type="term" value="F:GTP binding"/>
    <property type="evidence" value="ECO:0007669"/>
    <property type="project" value="UniProtKB-UniRule"/>
</dbReference>
<dbReference type="GO" id="GO:0003924">
    <property type="term" value="F:GTPase activity"/>
    <property type="evidence" value="ECO:0007669"/>
    <property type="project" value="UniProtKB-UniRule"/>
</dbReference>
<dbReference type="GO" id="GO:0097216">
    <property type="term" value="F:guanosine tetraphosphate binding"/>
    <property type="evidence" value="ECO:0007669"/>
    <property type="project" value="UniProtKB-ARBA"/>
</dbReference>
<dbReference type="GO" id="GO:0043022">
    <property type="term" value="F:ribosome binding"/>
    <property type="evidence" value="ECO:0007669"/>
    <property type="project" value="UniProtKB-UniRule"/>
</dbReference>
<dbReference type="GO" id="GO:0003746">
    <property type="term" value="F:translation elongation factor activity"/>
    <property type="evidence" value="ECO:0007669"/>
    <property type="project" value="UniProtKB-UniRule"/>
</dbReference>
<dbReference type="GO" id="GO:0045727">
    <property type="term" value="P:positive regulation of translation"/>
    <property type="evidence" value="ECO:0007669"/>
    <property type="project" value="UniProtKB-UniRule"/>
</dbReference>
<dbReference type="CDD" id="cd03699">
    <property type="entry name" value="EF4_II"/>
    <property type="match status" value="1"/>
</dbReference>
<dbReference type="CDD" id="cd16260">
    <property type="entry name" value="EF4_III"/>
    <property type="match status" value="1"/>
</dbReference>
<dbReference type="CDD" id="cd01890">
    <property type="entry name" value="LepA"/>
    <property type="match status" value="1"/>
</dbReference>
<dbReference type="CDD" id="cd03709">
    <property type="entry name" value="lepA_C"/>
    <property type="match status" value="1"/>
</dbReference>
<dbReference type="FunFam" id="3.40.50.300:FF:000078">
    <property type="entry name" value="Elongation factor 4"/>
    <property type="match status" value="1"/>
</dbReference>
<dbReference type="FunFam" id="2.40.30.10:FF:000015">
    <property type="entry name" value="Translation factor GUF1, mitochondrial"/>
    <property type="match status" value="1"/>
</dbReference>
<dbReference type="FunFam" id="3.30.70.240:FF:000007">
    <property type="entry name" value="Translation factor GUF1, mitochondrial"/>
    <property type="match status" value="1"/>
</dbReference>
<dbReference type="FunFam" id="3.30.70.2570:FF:000001">
    <property type="entry name" value="Translation factor GUF1, mitochondrial"/>
    <property type="match status" value="1"/>
</dbReference>
<dbReference type="FunFam" id="3.30.70.870:FF:000004">
    <property type="entry name" value="Translation factor GUF1, mitochondrial"/>
    <property type="match status" value="1"/>
</dbReference>
<dbReference type="Gene3D" id="3.30.70.240">
    <property type="match status" value="1"/>
</dbReference>
<dbReference type="Gene3D" id="3.30.70.2570">
    <property type="entry name" value="Elongation factor 4, C-terminal domain"/>
    <property type="match status" value="1"/>
</dbReference>
<dbReference type="Gene3D" id="3.30.70.870">
    <property type="entry name" value="Elongation Factor G (Translational Gtpase), domain 3"/>
    <property type="match status" value="1"/>
</dbReference>
<dbReference type="Gene3D" id="3.40.50.300">
    <property type="entry name" value="P-loop containing nucleotide triphosphate hydrolases"/>
    <property type="match status" value="1"/>
</dbReference>
<dbReference type="Gene3D" id="2.40.30.10">
    <property type="entry name" value="Translation factors"/>
    <property type="match status" value="1"/>
</dbReference>
<dbReference type="HAMAP" id="MF_00071">
    <property type="entry name" value="LepA"/>
    <property type="match status" value="1"/>
</dbReference>
<dbReference type="InterPro" id="IPR006297">
    <property type="entry name" value="EF-4"/>
</dbReference>
<dbReference type="InterPro" id="IPR035647">
    <property type="entry name" value="EFG_III/V"/>
</dbReference>
<dbReference type="InterPro" id="IPR000640">
    <property type="entry name" value="EFG_V-like"/>
</dbReference>
<dbReference type="InterPro" id="IPR004161">
    <property type="entry name" value="EFTu-like_2"/>
</dbReference>
<dbReference type="InterPro" id="IPR031157">
    <property type="entry name" value="G_TR_CS"/>
</dbReference>
<dbReference type="InterPro" id="IPR038363">
    <property type="entry name" value="LepA_C_sf"/>
</dbReference>
<dbReference type="InterPro" id="IPR013842">
    <property type="entry name" value="LepA_CTD"/>
</dbReference>
<dbReference type="InterPro" id="IPR035654">
    <property type="entry name" value="LepA_IV"/>
</dbReference>
<dbReference type="InterPro" id="IPR027417">
    <property type="entry name" value="P-loop_NTPase"/>
</dbReference>
<dbReference type="InterPro" id="IPR005225">
    <property type="entry name" value="Small_GTP-bd"/>
</dbReference>
<dbReference type="InterPro" id="IPR000795">
    <property type="entry name" value="T_Tr_GTP-bd_dom"/>
</dbReference>
<dbReference type="InterPro" id="IPR009000">
    <property type="entry name" value="Transl_B-barrel_sf"/>
</dbReference>
<dbReference type="NCBIfam" id="TIGR01393">
    <property type="entry name" value="lepA"/>
    <property type="match status" value="1"/>
</dbReference>
<dbReference type="NCBIfam" id="TIGR00231">
    <property type="entry name" value="small_GTP"/>
    <property type="match status" value="1"/>
</dbReference>
<dbReference type="PANTHER" id="PTHR43512:SF4">
    <property type="entry name" value="TRANSLATION FACTOR GUF1 HOMOLOG, CHLOROPLASTIC"/>
    <property type="match status" value="1"/>
</dbReference>
<dbReference type="PANTHER" id="PTHR43512">
    <property type="entry name" value="TRANSLATION FACTOR GUF1-RELATED"/>
    <property type="match status" value="1"/>
</dbReference>
<dbReference type="Pfam" id="PF00679">
    <property type="entry name" value="EFG_C"/>
    <property type="match status" value="1"/>
</dbReference>
<dbReference type="Pfam" id="PF00009">
    <property type="entry name" value="GTP_EFTU"/>
    <property type="match status" value="1"/>
</dbReference>
<dbReference type="Pfam" id="PF03144">
    <property type="entry name" value="GTP_EFTU_D2"/>
    <property type="match status" value="1"/>
</dbReference>
<dbReference type="Pfam" id="PF06421">
    <property type="entry name" value="LepA_C"/>
    <property type="match status" value="1"/>
</dbReference>
<dbReference type="PRINTS" id="PR00315">
    <property type="entry name" value="ELONGATNFCT"/>
</dbReference>
<dbReference type="SUPFAM" id="SSF54980">
    <property type="entry name" value="EF-G C-terminal domain-like"/>
    <property type="match status" value="2"/>
</dbReference>
<dbReference type="SUPFAM" id="SSF52540">
    <property type="entry name" value="P-loop containing nucleoside triphosphate hydrolases"/>
    <property type="match status" value="1"/>
</dbReference>
<dbReference type="SUPFAM" id="SSF50447">
    <property type="entry name" value="Translation proteins"/>
    <property type="match status" value="1"/>
</dbReference>
<dbReference type="PROSITE" id="PS00301">
    <property type="entry name" value="G_TR_1"/>
    <property type="match status" value="1"/>
</dbReference>
<dbReference type="PROSITE" id="PS51722">
    <property type="entry name" value="G_TR_2"/>
    <property type="match status" value="1"/>
</dbReference>
<proteinExistence type="inferred from homology"/>
<name>LEPA_VIBC3</name>
<organism>
    <name type="scientific">Vibrio cholerae serotype O1 (strain ATCC 39541 / Classical Ogawa 395 / O395)</name>
    <dbReference type="NCBI Taxonomy" id="345073"/>
    <lineage>
        <taxon>Bacteria</taxon>
        <taxon>Pseudomonadati</taxon>
        <taxon>Pseudomonadota</taxon>
        <taxon>Gammaproteobacteria</taxon>
        <taxon>Vibrionales</taxon>
        <taxon>Vibrionaceae</taxon>
        <taxon>Vibrio</taxon>
    </lineage>
</organism>
<sequence length="597" mass="66030">MKHIRNFSIIAHIDHGKSTLSDRLIQVCGGLSDREMAEQVLDSMDLERERGITIKAQSVTLDYTAKDGQTYQLNFIDTPGHVDFAYEVSRSLAACEGALLVVDAGQGVEAQTLANCYTAIEMDLEVVPILNKIDLPAAEPERVAEEIEDIVGIDAIDAVRCSAKTGVGVDEVLEKIVSAIPAPQGDPDAPLQALIIDSWFDNYLGVVSLVRIKNGSLKKNDKIKVMSTGQTWGVDRLGIFTPKQVDTDSLDTGEVGWVVCGIKDIMGAPVGDTLTLAKNGCEKALPGFKKVKPQVYAGLFPVSSDDYDNFRDALGKLSLNDASLFYEPETSAALGFGFRCGFLGMLHMEIIQERLEREYDLDLITTAPTVVYEVLKTNKEIVYVDSPAKLPAINDIEEIREPIARCNILVPADYLGNVITLCIEKRGTQVDMVYHGNQVALTYDIPMAEVVLDFFDRLKSTSRGYASLDYGFQRFEMSHMVRVDVLLNGDKVDALAIITHRDNSQTRGRQLVEKMKEFIPRQMFDIAIQAAIGNHIIARSTVKQLRKNVLAKCYGGDVSRKKKLLKKQKEGKKRMKQIGNVELPQEAFLAILHVGKD</sequence>
<feature type="chain" id="PRO_1000071183" description="Elongation factor 4">
    <location>
        <begin position="1"/>
        <end position="597"/>
    </location>
</feature>
<feature type="domain" description="tr-type G">
    <location>
        <begin position="2"/>
        <end position="184"/>
    </location>
</feature>
<feature type="binding site" evidence="1">
    <location>
        <begin position="14"/>
        <end position="19"/>
    </location>
    <ligand>
        <name>GTP</name>
        <dbReference type="ChEBI" id="CHEBI:37565"/>
    </ligand>
</feature>
<feature type="binding site" evidence="1">
    <location>
        <begin position="131"/>
        <end position="134"/>
    </location>
    <ligand>
        <name>GTP</name>
        <dbReference type="ChEBI" id="CHEBI:37565"/>
    </ligand>
</feature>
<evidence type="ECO:0000255" key="1">
    <source>
        <dbReference type="HAMAP-Rule" id="MF_00071"/>
    </source>
</evidence>
<comment type="function">
    <text evidence="1">Required for accurate and efficient protein synthesis under certain stress conditions. May act as a fidelity factor of the translation reaction, by catalyzing a one-codon backward translocation of tRNAs on improperly translocated ribosomes. Back-translocation proceeds from a post-translocation (POST) complex to a pre-translocation (PRE) complex, thus giving elongation factor G a second chance to translocate the tRNAs correctly. Binds to ribosomes in a GTP-dependent manner.</text>
</comment>
<comment type="catalytic activity">
    <reaction evidence="1">
        <text>GTP + H2O = GDP + phosphate + H(+)</text>
        <dbReference type="Rhea" id="RHEA:19669"/>
        <dbReference type="ChEBI" id="CHEBI:15377"/>
        <dbReference type="ChEBI" id="CHEBI:15378"/>
        <dbReference type="ChEBI" id="CHEBI:37565"/>
        <dbReference type="ChEBI" id="CHEBI:43474"/>
        <dbReference type="ChEBI" id="CHEBI:58189"/>
        <dbReference type="EC" id="3.6.5.n1"/>
    </reaction>
</comment>
<comment type="subcellular location">
    <subcellularLocation>
        <location evidence="1">Cell inner membrane</location>
        <topology evidence="1">Peripheral membrane protein</topology>
        <orientation evidence="1">Cytoplasmic side</orientation>
    </subcellularLocation>
</comment>
<comment type="similarity">
    <text evidence="1">Belongs to the TRAFAC class translation factor GTPase superfamily. Classic translation factor GTPase family. LepA subfamily.</text>
</comment>
<accession>A5F5G3</accession>
<accession>C3M4V4</accession>
<gene>
    <name evidence="1" type="primary">lepA</name>
    <name type="ordered locus">VC0395_A2041</name>
    <name type="ordered locus">VC395_2578</name>
</gene>